<evidence type="ECO:0000255" key="1">
    <source>
        <dbReference type="HAMAP-Rule" id="MF_01151"/>
    </source>
</evidence>
<feature type="chain" id="PRO_0000113816" description="Protein GrpE">
    <location>
        <begin position="1"/>
        <end position="217"/>
    </location>
</feature>
<protein>
    <recommendedName>
        <fullName evidence="1">Protein GrpE</fullName>
    </recommendedName>
    <alternativeName>
        <fullName evidence="1">HSP-70 cofactor</fullName>
    </alternativeName>
</protein>
<keyword id="KW-0143">Chaperone</keyword>
<keyword id="KW-0963">Cytoplasm</keyword>
<keyword id="KW-1185">Reference proteome</keyword>
<keyword id="KW-0346">Stress response</keyword>
<organism>
    <name type="scientific">Mycoplasma genitalium (strain ATCC 33530 / DSM 19775 / NCTC 10195 / G37)</name>
    <name type="common">Mycoplasmoides genitalium</name>
    <dbReference type="NCBI Taxonomy" id="243273"/>
    <lineage>
        <taxon>Bacteria</taxon>
        <taxon>Bacillati</taxon>
        <taxon>Mycoplasmatota</taxon>
        <taxon>Mycoplasmoidales</taxon>
        <taxon>Mycoplasmoidaceae</taxon>
        <taxon>Mycoplasmoides</taxon>
    </lineage>
</organism>
<reference key="1">
    <citation type="journal article" date="1995" name="Science">
        <title>The minimal gene complement of Mycoplasma genitalium.</title>
        <authorList>
            <person name="Fraser C.M."/>
            <person name="Gocayne J.D."/>
            <person name="White O."/>
            <person name="Adams M.D."/>
            <person name="Clayton R.A."/>
            <person name="Fleischmann R.D."/>
            <person name="Bult C.J."/>
            <person name="Kerlavage A.R."/>
            <person name="Sutton G.G."/>
            <person name="Kelley J.M."/>
            <person name="Fritchman J.L."/>
            <person name="Weidman J.F."/>
            <person name="Small K.V."/>
            <person name="Sandusky M."/>
            <person name="Fuhrmann J.L."/>
            <person name="Nguyen D.T."/>
            <person name="Utterback T.R."/>
            <person name="Saudek D.M."/>
            <person name="Phillips C.A."/>
            <person name="Merrick J.M."/>
            <person name="Tomb J.-F."/>
            <person name="Dougherty B.A."/>
            <person name="Bott K.F."/>
            <person name="Hu P.-C."/>
            <person name="Lucier T.S."/>
            <person name="Peterson S.N."/>
            <person name="Smith H.O."/>
            <person name="Hutchison C.A. III"/>
            <person name="Venter J.C."/>
        </authorList>
    </citation>
    <scope>NUCLEOTIDE SEQUENCE [LARGE SCALE GENOMIC DNA]</scope>
    <source>
        <strain>ATCC 33530 / DSM 19775 / NCTC 10195 / G37</strain>
    </source>
</reference>
<accession>P47443</accession>
<gene>
    <name evidence="1" type="primary">grpE</name>
    <name type="ordered locus">MG201</name>
</gene>
<sequence length="217" mass="25014">MCEKSQTIKELLNAIRTLVVKNNKAKVSMIEKELLAFVSELDKKFKQQLNNFNELQQKIPLLQKANEEFALKFERMQREAQNQIQAKLDELNLKNKKELEQAKKYAIAKTLDQPLNIIDQFEIALSYAQKDPQVKNYTTGFTMVLDAFSRWLEANGVTKIKIEPGMEFDEKIMSALELVDSNLAKNKVVRVSKSGYKLYDKVIRFASVFVSKGNKKS</sequence>
<comment type="function">
    <text evidence="1">Participates actively in the response to hyperosmotic and heat shock by preventing the aggregation of stress-denatured proteins, in association with DnaK and GrpE. It is the nucleotide exchange factor for DnaK and may function as a thermosensor. Unfolded proteins bind initially to DnaJ; upon interaction with the DnaJ-bound protein, DnaK hydrolyzes its bound ATP, resulting in the formation of a stable complex. GrpE releases ADP from DnaK; ATP binding to DnaK triggers the release of the substrate protein, thus completing the reaction cycle. Several rounds of ATP-dependent interactions between DnaJ, DnaK and GrpE are required for fully efficient folding.</text>
</comment>
<comment type="subunit">
    <text evidence="1">Homodimer.</text>
</comment>
<comment type="subcellular location">
    <subcellularLocation>
        <location evidence="1">Cytoplasm</location>
    </subcellularLocation>
</comment>
<comment type="similarity">
    <text evidence="1">Belongs to the GrpE family.</text>
</comment>
<dbReference type="EMBL" id="L43967">
    <property type="protein sequence ID" value="AAC71419.1"/>
    <property type="molecule type" value="Genomic_DNA"/>
</dbReference>
<dbReference type="PIR" id="B64222">
    <property type="entry name" value="B64222"/>
</dbReference>
<dbReference type="RefSeq" id="WP_009885741.1">
    <property type="nucleotide sequence ID" value="NC_000908.2"/>
</dbReference>
<dbReference type="SMR" id="P47443"/>
<dbReference type="FunCoup" id="P47443">
    <property type="interactions" value="192"/>
</dbReference>
<dbReference type="STRING" id="243273.MG_201"/>
<dbReference type="GeneID" id="88282332"/>
<dbReference type="KEGG" id="mge:MG_201"/>
<dbReference type="eggNOG" id="COG0576">
    <property type="taxonomic scope" value="Bacteria"/>
</dbReference>
<dbReference type="HOGENOM" id="CLU_1271142_0_0_14"/>
<dbReference type="InParanoid" id="P47443"/>
<dbReference type="OrthoDB" id="9812586at2"/>
<dbReference type="BioCyc" id="MGEN243273:G1GJ2-233-MONOMER"/>
<dbReference type="Proteomes" id="UP000000807">
    <property type="component" value="Chromosome"/>
</dbReference>
<dbReference type="GO" id="GO:0005737">
    <property type="term" value="C:cytoplasm"/>
    <property type="evidence" value="ECO:0007669"/>
    <property type="project" value="UniProtKB-SubCell"/>
</dbReference>
<dbReference type="GO" id="GO:0000774">
    <property type="term" value="F:adenyl-nucleotide exchange factor activity"/>
    <property type="evidence" value="ECO:0000318"/>
    <property type="project" value="GO_Central"/>
</dbReference>
<dbReference type="GO" id="GO:0042803">
    <property type="term" value="F:protein homodimerization activity"/>
    <property type="evidence" value="ECO:0007669"/>
    <property type="project" value="InterPro"/>
</dbReference>
<dbReference type="GO" id="GO:0051087">
    <property type="term" value="F:protein-folding chaperone binding"/>
    <property type="evidence" value="ECO:0007669"/>
    <property type="project" value="InterPro"/>
</dbReference>
<dbReference type="GO" id="GO:0051082">
    <property type="term" value="F:unfolded protein binding"/>
    <property type="evidence" value="ECO:0000318"/>
    <property type="project" value="GO_Central"/>
</dbReference>
<dbReference type="GO" id="GO:0006457">
    <property type="term" value="P:protein folding"/>
    <property type="evidence" value="ECO:0007669"/>
    <property type="project" value="InterPro"/>
</dbReference>
<dbReference type="CDD" id="cd00446">
    <property type="entry name" value="GrpE"/>
    <property type="match status" value="1"/>
</dbReference>
<dbReference type="Gene3D" id="3.90.20.20">
    <property type="match status" value="1"/>
</dbReference>
<dbReference type="Gene3D" id="2.30.22.10">
    <property type="entry name" value="Head domain of nucleotide exchange factor GrpE"/>
    <property type="match status" value="1"/>
</dbReference>
<dbReference type="HAMAP" id="MF_01151">
    <property type="entry name" value="GrpE"/>
    <property type="match status" value="1"/>
</dbReference>
<dbReference type="InterPro" id="IPR000740">
    <property type="entry name" value="GrpE"/>
</dbReference>
<dbReference type="InterPro" id="IPR013805">
    <property type="entry name" value="GrpE_coiled_coil"/>
</dbReference>
<dbReference type="InterPro" id="IPR009012">
    <property type="entry name" value="GrpE_head"/>
</dbReference>
<dbReference type="PANTHER" id="PTHR21237">
    <property type="entry name" value="GRPE PROTEIN"/>
    <property type="match status" value="1"/>
</dbReference>
<dbReference type="PANTHER" id="PTHR21237:SF23">
    <property type="entry name" value="GRPE PROTEIN HOMOLOG, MITOCHONDRIAL"/>
    <property type="match status" value="1"/>
</dbReference>
<dbReference type="Pfam" id="PF01025">
    <property type="entry name" value="GrpE"/>
    <property type="match status" value="1"/>
</dbReference>
<dbReference type="PRINTS" id="PR00773">
    <property type="entry name" value="GRPEPROTEIN"/>
</dbReference>
<dbReference type="SUPFAM" id="SSF58014">
    <property type="entry name" value="Coiled-coil domain of nucleotide exchange factor GrpE"/>
    <property type="match status" value="1"/>
</dbReference>
<dbReference type="SUPFAM" id="SSF51064">
    <property type="entry name" value="Head domain of nucleotide exchange factor GrpE"/>
    <property type="match status" value="1"/>
</dbReference>
<dbReference type="PROSITE" id="PS01071">
    <property type="entry name" value="GRPE"/>
    <property type="match status" value="1"/>
</dbReference>
<name>GRPE_MYCGE</name>
<proteinExistence type="inferred from homology"/>